<gene>
    <name type="primary">creB</name>
    <name type="ORF">AFUB_069810</name>
</gene>
<accession>B0Y4P5</accession>
<keyword id="KW-0175">Coiled coil</keyword>
<keyword id="KW-0378">Hydrolase</keyword>
<keyword id="KW-0645">Protease</keyword>
<keyword id="KW-0788">Thiol protease</keyword>
<keyword id="KW-0833">Ubl conjugation pathway</keyword>
<organism>
    <name type="scientific">Aspergillus fumigatus (strain CBS 144.89 / FGSC A1163 / CEA10)</name>
    <name type="common">Neosartorya fumigata</name>
    <dbReference type="NCBI Taxonomy" id="451804"/>
    <lineage>
        <taxon>Eukaryota</taxon>
        <taxon>Fungi</taxon>
        <taxon>Dikarya</taxon>
        <taxon>Ascomycota</taxon>
        <taxon>Pezizomycotina</taxon>
        <taxon>Eurotiomycetes</taxon>
        <taxon>Eurotiomycetidae</taxon>
        <taxon>Eurotiales</taxon>
        <taxon>Aspergillaceae</taxon>
        <taxon>Aspergillus</taxon>
        <taxon>Aspergillus subgen. Fumigati</taxon>
    </lineage>
</organism>
<protein>
    <recommendedName>
        <fullName>Probable ubiquitin carboxyl-terminal hydrolase creB</fullName>
        <ecNumber>3.4.19.12</ecNumber>
    </recommendedName>
    <alternativeName>
        <fullName>Carbon catabolite repression protein B</fullName>
    </alternativeName>
    <alternativeName>
        <fullName>Deubiquitinating enzyme creB</fullName>
    </alternativeName>
    <alternativeName>
        <fullName>Ubiquitin thioesterase creB</fullName>
    </alternativeName>
    <alternativeName>
        <fullName>Ubiquitin-hydrolyzing enzyme creB</fullName>
    </alternativeName>
    <alternativeName>
        <fullName>Ubiquitin-specific-processing protease creB</fullName>
    </alternativeName>
</protein>
<evidence type="ECO:0000250" key="1"/>
<evidence type="ECO:0000255" key="2"/>
<evidence type="ECO:0000255" key="3">
    <source>
        <dbReference type="PROSITE-ProRule" id="PRU10092"/>
    </source>
</evidence>
<evidence type="ECO:0000255" key="4">
    <source>
        <dbReference type="PROSITE-ProRule" id="PRU10093"/>
    </source>
</evidence>
<evidence type="ECO:0000256" key="5">
    <source>
        <dbReference type="SAM" id="MobiDB-lite"/>
    </source>
</evidence>
<evidence type="ECO:0000305" key="6"/>
<reference key="1">
    <citation type="journal article" date="2008" name="PLoS Genet.">
        <title>Genomic islands in the pathogenic filamentous fungus Aspergillus fumigatus.</title>
        <authorList>
            <person name="Fedorova N.D."/>
            <person name="Khaldi N."/>
            <person name="Joardar V.S."/>
            <person name="Maiti R."/>
            <person name="Amedeo P."/>
            <person name="Anderson M.J."/>
            <person name="Crabtree J."/>
            <person name="Silva J.C."/>
            <person name="Badger J.H."/>
            <person name="Albarraq A."/>
            <person name="Angiuoli S."/>
            <person name="Bussey H."/>
            <person name="Bowyer P."/>
            <person name="Cotty P.J."/>
            <person name="Dyer P.S."/>
            <person name="Egan A."/>
            <person name="Galens K."/>
            <person name="Fraser-Liggett C.M."/>
            <person name="Haas B.J."/>
            <person name="Inman J.M."/>
            <person name="Kent R."/>
            <person name="Lemieux S."/>
            <person name="Malavazi I."/>
            <person name="Orvis J."/>
            <person name="Roemer T."/>
            <person name="Ronning C.M."/>
            <person name="Sundaram J.P."/>
            <person name="Sutton G."/>
            <person name="Turner G."/>
            <person name="Venter J.C."/>
            <person name="White O.R."/>
            <person name="Whitty B.R."/>
            <person name="Youngman P."/>
            <person name="Wolfe K.H."/>
            <person name="Goldman G.H."/>
            <person name="Wortman J.R."/>
            <person name="Jiang B."/>
            <person name="Denning D.W."/>
            <person name="Nierman W.C."/>
        </authorList>
    </citation>
    <scope>NUCLEOTIDE SEQUENCE [LARGE SCALE GENOMIC DNA]</scope>
    <source>
        <strain>CBS 144.89 / FGSC A1163 / CEA10</strain>
    </source>
</reference>
<comment type="function">
    <text evidence="1">Ubiquitin thioesterase component of the regulatory network controlling carbon source utilization through ubiquitination and deubiquitination involving creA, creB, creC, creD and acrB. Deubiquitinates the creA catabolic repressor and the quinate permease qutD. Also plays a role in response to carbon starvation and the control of extracellular proteases activity (By similarity).</text>
</comment>
<comment type="catalytic activity">
    <reaction>
        <text>Thiol-dependent hydrolysis of ester, thioester, amide, peptide and isopeptide bonds formed by the C-terminal Gly of ubiquitin (a 76-residue protein attached to proteins as an intracellular targeting signal).</text>
        <dbReference type="EC" id="3.4.19.12"/>
    </reaction>
</comment>
<comment type="subunit">
    <text evidence="1">Interacts with creA, creC and qutD.</text>
</comment>
<comment type="similarity">
    <text evidence="6">Belongs to the peptidase C19 family.</text>
</comment>
<feature type="chain" id="PRO_0000395678" description="Probable ubiquitin carboxyl-terminal hydrolase creB">
    <location>
        <begin position="1"/>
        <end position="767"/>
    </location>
</feature>
<feature type="domain" description="USP">
    <location>
        <begin position="49"/>
        <end position="462"/>
    </location>
</feature>
<feature type="region of interest" description="Disordered" evidence="5">
    <location>
        <begin position="107"/>
        <end position="140"/>
    </location>
</feature>
<feature type="region of interest" description="Disordered" evidence="5">
    <location>
        <begin position="232"/>
        <end position="263"/>
    </location>
</feature>
<feature type="region of interest" description="Disordered" evidence="5">
    <location>
        <begin position="490"/>
        <end position="767"/>
    </location>
</feature>
<feature type="coiled-coil region" evidence="2">
    <location>
        <begin position="574"/>
        <end position="641"/>
    </location>
</feature>
<feature type="compositionally biased region" description="Polar residues" evidence="5">
    <location>
        <begin position="250"/>
        <end position="263"/>
    </location>
</feature>
<feature type="compositionally biased region" description="Low complexity" evidence="5">
    <location>
        <begin position="540"/>
        <end position="554"/>
    </location>
</feature>
<feature type="compositionally biased region" description="Low complexity" evidence="5">
    <location>
        <begin position="564"/>
        <end position="573"/>
    </location>
</feature>
<feature type="compositionally biased region" description="Basic and acidic residues" evidence="5">
    <location>
        <begin position="577"/>
        <end position="650"/>
    </location>
</feature>
<feature type="compositionally biased region" description="Basic residues" evidence="5">
    <location>
        <begin position="656"/>
        <end position="667"/>
    </location>
</feature>
<feature type="compositionally biased region" description="Polar residues" evidence="5">
    <location>
        <begin position="690"/>
        <end position="700"/>
    </location>
</feature>
<feature type="compositionally biased region" description="Low complexity" evidence="5">
    <location>
        <begin position="701"/>
        <end position="713"/>
    </location>
</feature>
<feature type="compositionally biased region" description="Basic and acidic residues" evidence="5">
    <location>
        <begin position="731"/>
        <end position="749"/>
    </location>
</feature>
<feature type="compositionally biased region" description="Basic residues" evidence="5">
    <location>
        <begin position="750"/>
        <end position="767"/>
    </location>
</feature>
<feature type="active site" description="Nucleophile" evidence="3 4">
    <location>
        <position position="58"/>
    </location>
</feature>
<feature type="active site" description="Proton acceptor" evidence="3 4">
    <location>
        <position position="413"/>
    </location>
</feature>
<name>CREB_ASPFC</name>
<dbReference type="EC" id="3.4.19.12"/>
<dbReference type="EMBL" id="DS499598">
    <property type="protein sequence ID" value="EDP50644.1"/>
    <property type="molecule type" value="Genomic_DNA"/>
</dbReference>
<dbReference type="SMR" id="B0Y4P5"/>
<dbReference type="EnsemblFungi" id="EDP50644">
    <property type="protein sequence ID" value="EDP50644"/>
    <property type="gene ID" value="AFUB_069810"/>
</dbReference>
<dbReference type="HOGENOM" id="CLU_008279_0_2_1"/>
<dbReference type="OrthoDB" id="109616at5052"/>
<dbReference type="PhylomeDB" id="B0Y4P5"/>
<dbReference type="Proteomes" id="UP000001699">
    <property type="component" value="Unassembled WGS sequence"/>
</dbReference>
<dbReference type="GO" id="GO:0005829">
    <property type="term" value="C:cytosol"/>
    <property type="evidence" value="ECO:0007669"/>
    <property type="project" value="TreeGrafter"/>
</dbReference>
<dbReference type="GO" id="GO:0005634">
    <property type="term" value="C:nucleus"/>
    <property type="evidence" value="ECO:0007669"/>
    <property type="project" value="TreeGrafter"/>
</dbReference>
<dbReference type="GO" id="GO:0004843">
    <property type="term" value="F:cysteine-type deubiquitinase activity"/>
    <property type="evidence" value="ECO:0000250"/>
    <property type="project" value="UniProtKB"/>
</dbReference>
<dbReference type="GO" id="GO:0045013">
    <property type="term" value="P:carbon catabolite repression of transcription"/>
    <property type="evidence" value="ECO:0000250"/>
    <property type="project" value="UniProtKB"/>
</dbReference>
<dbReference type="GO" id="GO:0016579">
    <property type="term" value="P:protein deubiquitination"/>
    <property type="evidence" value="ECO:0007669"/>
    <property type="project" value="InterPro"/>
</dbReference>
<dbReference type="GO" id="GO:0006511">
    <property type="term" value="P:ubiquitin-dependent protein catabolic process"/>
    <property type="evidence" value="ECO:0000250"/>
    <property type="project" value="UniProtKB"/>
</dbReference>
<dbReference type="CDD" id="cd02663">
    <property type="entry name" value="Peptidase_C19G"/>
    <property type="match status" value="1"/>
</dbReference>
<dbReference type="FunFam" id="3.90.70.10:FF:000075">
    <property type="entry name" value="Ubiquitin carboxyl-terminal hydrolase creB"/>
    <property type="match status" value="1"/>
</dbReference>
<dbReference type="Gene3D" id="3.90.70.10">
    <property type="entry name" value="Cysteine proteinases"/>
    <property type="match status" value="1"/>
</dbReference>
<dbReference type="InterPro" id="IPR038765">
    <property type="entry name" value="Papain-like_cys_pep_sf"/>
</dbReference>
<dbReference type="InterPro" id="IPR050164">
    <property type="entry name" value="Peptidase_C19"/>
</dbReference>
<dbReference type="InterPro" id="IPR001394">
    <property type="entry name" value="Peptidase_C19_UCH"/>
</dbReference>
<dbReference type="InterPro" id="IPR018200">
    <property type="entry name" value="USP_CS"/>
</dbReference>
<dbReference type="InterPro" id="IPR028889">
    <property type="entry name" value="USP_dom"/>
</dbReference>
<dbReference type="PANTHER" id="PTHR24006:SF733">
    <property type="entry name" value="RE52890P"/>
    <property type="match status" value="1"/>
</dbReference>
<dbReference type="PANTHER" id="PTHR24006">
    <property type="entry name" value="UBIQUITIN CARBOXYL-TERMINAL HYDROLASE"/>
    <property type="match status" value="1"/>
</dbReference>
<dbReference type="Pfam" id="PF00443">
    <property type="entry name" value="UCH"/>
    <property type="match status" value="1"/>
</dbReference>
<dbReference type="SUPFAM" id="SSF54001">
    <property type="entry name" value="Cysteine proteinases"/>
    <property type="match status" value="1"/>
</dbReference>
<dbReference type="PROSITE" id="PS00972">
    <property type="entry name" value="USP_1"/>
    <property type="match status" value="1"/>
</dbReference>
<dbReference type="PROSITE" id="PS00973">
    <property type="entry name" value="USP_2"/>
    <property type="match status" value="1"/>
</dbReference>
<dbReference type="PROSITE" id="PS50235">
    <property type="entry name" value="USP_3"/>
    <property type="match status" value="1"/>
</dbReference>
<proteinExistence type="inferred from homology"/>
<sequence length="767" mass="86762">MFCLLLGSTAPSVGAVPAKKEPQPPPMTPLEKRLLDMGPIREDGSDKFYGMENYGNTCYCNSILQCLYYSVPFREAVINYPTRTPIESLEAALAKSLRYPNPNAQLEAEAQAEKQKAANAQRPGMPPNPQQKPEDKDSPEYKKKMALQTLPLLETQNNASSYGMSESLFTSLKDIFESVVGSQSRIGIIRPQQFLEVLRRDHEMFRTAMHQDAHEFLNLLLNEVVANVEAEASKQPPIEKSLPAPETADSVDQSSSTGSKTPNTTRWVHELFEGLLTSETQCLTCEKVSQRDEVFLDLSVDLEQHSSVTSCLRKFSAEEMLCERNKFHCDNCGGLQEAEKRMKIKRLPRILALHLKRFKYTEDLQRLQKLFHRVVYPYHLRLFNTTDDAEDPDRLYELYAVVVHIGGGPYHGHYVAIIKTEDRGWLLFDDEMVEPVDKNYVKNFFGDKPGLACAYVLFYQETTLEAVLKEQEQENMDSNLAATDANDTILKQNGFPQSPLAHVHSASQIPSHEDNLRPNGLRRAPTAPQLSTHHEHGDPESAPFSPLSPLSPLSQTPPVPPVPERVTTVATPPKNDALAKKERAREEKERKAAEKEREKAEKLRRKEQEARMKENQRREEAELKAALEMSKASKAEEDRRLSHENGKEKQGGSLSRLKRGSKSLSHRLGKDKETRSVSSDLPPVPIPEHSTLSQTGPTSEQQQQQQQQQQQQQSPPNHDQPPNSPQLGKPTIREDEQVNHKDSKHERTGHGKWRSFSLRKKSFSILS</sequence>